<gene>
    <name evidence="1" type="primary">kdsB</name>
    <name type="ordered locus">BURPS1710b_1081</name>
</gene>
<feature type="chain" id="PRO_0000370037" description="3-deoxy-manno-octulosonate cytidylyltransferase">
    <location>
        <begin position="1"/>
        <end position="263"/>
    </location>
</feature>
<proteinExistence type="inferred from homology"/>
<comment type="function">
    <text evidence="1">Activates KDO (a required 8-carbon sugar) for incorporation into bacterial lipopolysaccharide in Gram-negative bacteria.</text>
</comment>
<comment type="catalytic activity">
    <reaction evidence="1">
        <text>3-deoxy-alpha-D-manno-oct-2-ulosonate + CTP = CMP-3-deoxy-beta-D-manno-octulosonate + diphosphate</text>
        <dbReference type="Rhea" id="RHEA:23448"/>
        <dbReference type="ChEBI" id="CHEBI:33019"/>
        <dbReference type="ChEBI" id="CHEBI:37563"/>
        <dbReference type="ChEBI" id="CHEBI:85986"/>
        <dbReference type="ChEBI" id="CHEBI:85987"/>
        <dbReference type="EC" id="2.7.7.38"/>
    </reaction>
</comment>
<comment type="pathway">
    <text evidence="1">Nucleotide-sugar biosynthesis; CMP-3-deoxy-D-manno-octulosonate biosynthesis; CMP-3-deoxy-D-manno-octulosonate from 3-deoxy-D-manno-octulosonate and CTP: step 1/1.</text>
</comment>
<comment type="pathway">
    <text evidence="1">Bacterial outer membrane biogenesis; lipopolysaccharide biosynthesis.</text>
</comment>
<comment type="subcellular location">
    <subcellularLocation>
        <location evidence="1">Cytoplasm</location>
    </subcellularLocation>
</comment>
<comment type="similarity">
    <text evidence="1">Belongs to the KdsB family.</text>
</comment>
<comment type="sequence caution" evidence="2">
    <conflict type="erroneous initiation">
        <sequence resource="EMBL-CDS" id="ABA48705"/>
    </conflict>
</comment>
<dbReference type="EC" id="2.7.7.38" evidence="1"/>
<dbReference type="EMBL" id="CP000124">
    <property type="protein sequence ID" value="ABA48705.1"/>
    <property type="status" value="ALT_INIT"/>
    <property type="molecule type" value="Genomic_DNA"/>
</dbReference>
<dbReference type="RefSeq" id="WP_004185994.1">
    <property type="nucleotide sequence ID" value="NC_007434.1"/>
</dbReference>
<dbReference type="SMR" id="Q3JVB0"/>
<dbReference type="EnsemblBacteria" id="ABA48705">
    <property type="protein sequence ID" value="ABA48705"/>
    <property type="gene ID" value="BURPS1710b_1081"/>
</dbReference>
<dbReference type="GeneID" id="92979969"/>
<dbReference type="KEGG" id="bpm:BURPS1710b_1081"/>
<dbReference type="HOGENOM" id="CLU_065038_1_0_4"/>
<dbReference type="UniPathway" id="UPA00030"/>
<dbReference type="UniPathway" id="UPA00358">
    <property type="reaction ID" value="UER00476"/>
</dbReference>
<dbReference type="Proteomes" id="UP000002700">
    <property type="component" value="Chromosome I"/>
</dbReference>
<dbReference type="GO" id="GO:0005829">
    <property type="term" value="C:cytosol"/>
    <property type="evidence" value="ECO:0007669"/>
    <property type="project" value="TreeGrafter"/>
</dbReference>
<dbReference type="GO" id="GO:0008690">
    <property type="term" value="F:3-deoxy-manno-octulosonate cytidylyltransferase activity"/>
    <property type="evidence" value="ECO:0007669"/>
    <property type="project" value="UniProtKB-UniRule"/>
</dbReference>
<dbReference type="GO" id="GO:0033468">
    <property type="term" value="P:CMP-keto-3-deoxy-D-manno-octulosonic acid biosynthetic process"/>
    <property type="evidence" value="ECO:0007669"/>
    <property type="project" value="UniProtKB-UniRule"/>
</dbReference>
<dbReference type="GO" id="GO:0009103">
    <property type="term" value="P:lipopolysaccharide biosynthetic process"/>
    <property type="evidence" value="ECO:0007669"/>
    <property type="project" value="UniProtKB-UniRule"/>
</dbReference>
<dbReference type="CDD" id="cd02517">
    <property type="entry name" value="CMP-KDO-Synthetase"/>
    <property type="match status" value="1"/>
</dbReference>
<dbReference type="FunFam" id="3.90.550.10:FF:000011">
    <property type="entry name" value="3-deoxy-manno-octulosonate cytidylyltransferase"/>
    <property type="match status" value="1"/>
</dbReference>
<dbReference type="Gene3D" id="3.90.550.10">
    <property type="entry name" value="Spore Coat Polysaccharide Biosynthesis Protein SpsA, Chain A"/>
    <property type="match status" value="1"/>
</dbReference>
<dbReference type="HAMAP" id="MF_00057">
    <property type="entry name" value="KdsB"/>
    <property type="match status" value="1"/>
</dbReference>
<dbReference type="InterPro" id="IPR003329">
    <property type="entry name" value="Cytidylyl_trans"/>
</dbReference>
<dbReference type="InterPro" id="IPR004528">
    <property type="entry name" value="KdsB"/>
</dbReference>
<dbReference type="InterPro" id="IPR029044">
    <property type="entry name" value="Nucleotide-diphossugar_trans"/>
</dbReference>
<dbReference type="NCBIfam" id="TIGR00466">
    <property type="entry name" value="kdsB"/>
    <property type="match status" value="1"/>
</dbReference>
<dbReference type="NCBIfam" id="NF003950">
    <property type="entry name" value="PRK05450.1-3"/>
    <property type="match status" value="1"/>
</dbReference>
<dbReference type="NCBIfam" id="NF003952">
    <property type="entry name" value="PRK05450.1-5"/>
    <property type="match status" value="1"/>
</dbReference>
<dbReference type="NCBIfam" id="NF009905">
    <property type="entry name" value="PRK13368.1"/>
    <property type="match status" value="1"/>
</dbReference>
<dbReference type="PANTHER" id="PTHR42866">
    <property type="entry name" value="3-DEOXY-MANNO-OCTULOSONATE CYTIDYLYLTRANSFERASE"/>
    <property type="match status" value="1"/>
</dbReference>
<dbReference type="PANTHER" id="PTHR42866:SF2">
    <property type="entry name" value="3-DEOXY-MANNO-OCTULOSONATE CYTIDYLYLTRANSFERASE, MITOCHONDRIAL"/>
    <property type="match status" value="1"/>
</dbReference>
<dbReference type="Pfam" id="PF02348">
    <property type="entry name" value="CTP_transf_3"/>
    <property type="match status" value="1"/>
</dbReference>
<dbReference type="SUPFAM" id="SSF53448">
    <property type="entry name" value="Nucleotide-diphospho-sugar transferases"/>
    <property type="match status" value="1"/>
</dbReference>
<evidence type="ECO:0000255" key="1">
    <source>
        <dbReference type="HAMAP-Rule" id="MF_00057"/>
    </source>
</evidence>
<evidence type="ECO:0000305" key="2"/>
<keyword id="KW-0963">Cytoplasm</keyword>
<keyword id="KW-0448">Lipopolysaccharide biosynthesis</keyword>
<keyword id="KW-0548">Nucleotidyltransferase</keyword>
<keyword id="KW-0808">Transferase</keyword>
<accession>Q3JVB0</accession>
<reference key="1">
    <citation type="journal article" date="2010" name="Genome Biol. Evol.">
        <title>Continuing evolution of Burkholderia mallei through genome reduction and large-scale rearrangements.</title>
        <authorList>
            <person name="Losada L."/>
            <person name="Ronning C.M."/>
            <person name="DeShazer D."/>
            <person name="Woods D."/>
            <person name="Fedorova N."/>
            <person name="Kim H.S."/>
            <person name="Shabalina S.A."/>
            <person name="Pearson T.R."/>
            <person name="Brinkac L."/>
            <person name="Tan P."/>
            <person name="Nandi T."/>
            <person name="Crabtree J."/>
            <person name="Badger J."/>
            <person name="Beckstrom-Sternberg S."/>
            <person name="Saqib M."/>
            <person name="Schutzer S.E."/>
            <person name="Keim P."/>
            <person name="Nierman W.C."/>
        </authorList>
    </citation>
    <scope>NUCLEOTIDE SEQUENCE [LARGE SCALE GENOMIC DNA]</scope>
    <source>
        <strain>1710b</strain>
    </source>
</reference>
<sequence>MTSPLPFVAVVPARLASTRLPNKPLADLGGKPMVVRVAERAREAGAQQVLVASDAQRVLDAVREHGFDAVLTRADHPSGTDRLAEVAAKLGFDDDTIVVNVQGDEPLIDPQLVRDVASHLAAHPSCAIATAAHPIHEAHEVFNPNYVKVVLDAHGVALYFSRAPIPWSRDAYLPHWPNVAAMPAPTCPVYRHIGLYAYRARFLRTYPTLAQAPIEAAEQLEQLRAMWHGERIAVRVTEHAPEAGIDTPADLERVQALFRSRAK</sequence>
<organism>
    <name type="scientific">Burkholderia pseudomallei (strain 1710b)</name>
    <dbReference type="NCBI Taxonomy" id="320372"/>
    <lineage>
        <taxon>Bacteria</taxon>
        <taxon>Pseudomonadati</taxon>
        <taxon>Pseudomonadota</taxon>
        <taxon>Betaproteobacteria</taxon>
        <taxon>Burkholderiales</taxon>
        <taxon>Burkholderiaceae</taxon>
        <taxon>Burkholderia</taxon>
        <taxon>pseudomallei group</taxon>
    </lineage>
</organism>
<protein>
    <recommendedName>
        <fullName evidence="1">3-deoxy-manno-octulosonate cytidylyltransferase</fullName>
        <ecNumber evidence="1">2.7.7.38</ecNumber>
    </recommendedName>
    <alternativeName>
        <fullName evidence="1">CMP-2-keto-3-deoxyoctulosonic acid synthase</fullName>
        <shortName evidence="1">CKS</shortName>
        <shortName evidence="1">CMP-KDO synthase</shortName>
    </alternativeName>
</protein>
<name>KDSB_BURP1</name>